<protein>
    <recommendedName>
        <fullName evidence="1">Leucine--tRNA ligase</fullName>
        <ecNumber evidence="1">6.1.1.4</ecNumber>
    </recommendedName>
    <alternativeName>
        <fullName evidence="1">Leucyl-tRNA synthetase</fullName>
        <shortName evidence="1">LeuRS</shortName>
    </alternativeName>
</protein>
<feature type="chain" id="PRO_0000334815" description="Leucine--tRNA ligase">
    <location>
        <begin position="1"/>
        <end position="859"/>
    </location>
</feature>
<feature type="short sequence motif" description="'HIGH' region">
    <location>
        <begin position="42"/>
        <end position="52"/>
    </location>
</feature>
<feature type="short sequence motif" description="'KMSKS' region">
    <location>
        <begin position="618"/>
        <end position="622"/>
    </location>
</feature>
<feature type="binding site" evidence="1">
    <location>
        <position position="621"/>
    </location>
    <ligand>
        <name>ATP</name>
        <dbReference type="ChEBI" id="CHEBI:30616"/>
    </ligand>
</feature>
<name>SYL_SHEB9</name>
<comment type="catalytic activity">
    <reaction evidence="1">
        <text>tRNA(Leu) + L-leucine + ATP = L-leucyl-tRNA(Leu) + AMP + diphosphate</text>
        <dbReference type="Rhea" id="RHEA:11688"/>
        <dbReference type="Rhea" id="RHEA-COMP:9613"/>
        <dbReference type="Rhea" id="RHEA-COMP:9622"/>
        <dbReference type="ChEBI" id="CHEBI:30616"/>
        <dbReference type="ChEBI" id="CHEBI:33019"/>
        <dbReference type="ChEBI" id="CHEBI:57427"/>
        <dbReference type="ChEBI" id="CHEBI:78442"/>
        <dbReference type="ChEBI" id="CHEBI:78494"/>
        <dbReference type="ChEBI" id="CHEBI:456215"/>
        <dbReference type="EC" id="6.1.1.4"/>
    </reaction>
</comment>
<comment type="subcellular location">
    <subcellularLocation>
        <location evidence="1">Cytoplasm</location>
    </subcellularLocation>
</comment>
<comment type="similarity">
    <text evidence="1">Belongs to the class-I aminoacyl-tRNA synthetase family.</text>
</comment>
<comment type="sequence caution" evidence="2">
    <conflict type="erroneous initiation">
        <sequence resource="EMBL-CDS" id="ABX50609"/>
    </conflict>
</comment>
<proteinExistence type="inferred from homology"/>
<sequence length="859" mass="96596">MQEQYNPSEIEALVQKHWHDNKTFEVTEDANKEKFYCLSMFPYPSGRLHMGHVRNYTIGDVVARFQRLQGKNVLQPIGWDSFGLPAENAAINNKTAPAPWTYENIEYMKNQLKLLGFGYDWSREIATCTPEYYRWEQWFFTKLYEKGLVYKKTASVNWCPNDETVLANEQVQDGCCWRCDTPVEQKEIPQWFIKITAYAEELLNDIDTLDGWPDQVKTMQRNWIGRSEGVEMTFGVAGHDKSFDIYTTRPDTLMGVTYVAIAAGHPLAEIAAQTNPELAAFIDECKNSTTSEAELATMEKRGVATGLFAIHPITGKQVPIWAANFVLMNYGTGAVMSVPGHDQRDFEFAKKYGLAIEAVIKPVDGDVDISEAAYTEKGVLFNSGEFDGLDFEAGFNAIANKLVAEGKGKRQVNYRLRDWGVSRQRYWGAPIPMVTLADGTVIPTPADQLPVLLPEDVVMDGIQSPIKADKEWAKTQVNGQDALRETDTFDTFMESSWYYARYCSPHADEMLDPAKANYWLPVDQYIGGIEHACMHLLYFRFFHKLLRDAGLVNSNEPAKQLLTQGMVLADAFYYINEKGARVWVSPLDVATTEKDDKGRITKAIDKDGNELVYTGMSKMSKSKNNGIDPQVMVEKYGADTVRLFMMFASPPELTLEWQESGVEGAHRFIKRLWKLANEHVNQDNSEALDASKLTSDQKALRREVHKTIAKVTDDIGRRQMFNTAVAAVMELMNHLQKAPQTTGQDNAIIGEALSAIVRLLYPIIPHVSFNLWNELGNASNIEDSQWPVVDEAALVEDSKLIVVQVNGKVRAKITVAADADKESVEALGMSDEHVIKYLDGLTVRKVIYVPGKLLSIVAN</sequence>
<organism>
    <name type="scientific">Shewanella baltica (strain OS195)</name>
    <dbReference type="NCBI Taxonomy" id="399599"/>
    <lineage>
        <taxon>Bacteria</taxon>
        <taxon>Pseudomonadati</taxon>
        <taxon>Pseudomonadota</taxon>
        <taxon>Gammaproteobacteria</taxon>
        <taxon>Alteromonadales</taxon>
        <taxon>Shewanellaceae</taxon>
        <taxon>Shewanella</taxon>
    </lineage>
</organism>
<keyword id="KW-0030">Aminoacyl-tRNA synthetase</keyword>
<keyword id="KW-0067">ATP-binding</keyword>
<keyword id="KW-0963">Cytoplasm</keyword>
<keyword id="KW-0436">Ligase</keyword>
<keyword id="KW-0547">Nucleotide-binding</keyword>
<keyword id="KW-0648">Protein biosynthesis</keyword>
<dbReference type="EC" id="6.1.1.4" evidence="1"/>
<dbReference type="EMBL" id="CP000891">
    <property type="protein sequence ID" value="ABX50609.1"/>
    <property type="status" value="ALT_INIT"/>
    <property type="molecule type" value="Genomic_DNA"/>
</dbReference>
<dbReference type="RefSeq" id="WP_006086959.1">
    <property type="nucleotide sequence ID" value="NC_009997.1"/>
</dbReference>
<dbReference type="SMR" id="A9L001"/>
<dbReference type="GeneID" id="11773495"/>
<dbReference type="KEGG" id="sbn:Sbal195_3447"/>
<dbReference type="HOGENOM" id="CLU_004427_0_0_6"/>
<dbReference type="Proteomes" id="UP000000770">
    <property type="component" value="Chromosome"/>
</dbReference>
<dbReference type="GO" id="GO:0005829">
    <property type="term" value="C:cytosol"/>
    <property type="evidence" value="ECO:0007669"/>
    <property type="project" value="TreeGrafter"/>
</dbReference>
<dbReference type="GO" id="GO:0002161">
    <property type="term" value="F:aminoacyl-tRNA deacylase activity"/>
    <property type="evidence" value="ECO:0007669"/>
    <property type="project" value="InterPro"/>
</dbReference>
<dbReference type="GO" id="GO:0005524">
    <property type="term" value="F:ATP binding"/>
    <property type="evidence" value="ECO:0007669"/>
    <property type="project" value="UniProtKB-UniRule"/>
</dbReference>
<dbReference type="GO" id="GO:0004823">
    <property type="term" value="F:leucine-tRNA ligase activity"/>
    <property type="evidence" value="ECO:0007669"/>
    <property type="project" value="UniProtKB-UniRule"/>
</dbReference>
<dbReference type="GO" id="GO:0006429">
    <property type="term" value="P:leucyl-tRNA aminoacylation"/>
    <property type="evidence" value="ECO:0007669"/>
    <property type="project" value="UniProtKB-UniRule"/>
</dbReference>
<dbReference type="CDD" id="cd07958">
    <property type="entry name" value="Anticodon_Ia_Leu_BEm"/>
    <property type="match status" value="1"/>
</dbReference>
<dbReference type="CDD" id="cd00812">
    <property type="entry name" value="LeuRS_core"/>
    <property type="match status" value="1"/>
</dbReference>
<dbReference type="FunFam" id="1.10.730.10:FF:000003">
    <property type="entry name" value="Leucine--tRNA ligase"/>
    <property type="match status" value="1"/>
</dbReference>
<dbReference type="FunFam" id="2.20.28.290:FF:000001">
    <property type="entry name" value="Leucine--tRNA ligase"/>
    <property type="match status" value="1"/>
</dbReference>
<dbReference type="FunFam" id="3.10.20.590:FF:000001">
    <property type="entry name" value="Leucine--tRNA ligase"/>
    <property type="match status" value="1"/>
</dbReference>
<dbReference type="FunFam" id="3.40.50.620:FF:000003">
    <property type="entry name" value="Leucine--tRNA ligase"/>
    <property type="match status" value="1"/>
</dbReference>
<dbReference type="FunFam" id="3.40.50.620:FF:000124">
    <property type="entry name" value="Leucine--tRNA ligase"/>
    <property type="match status" value="1"/>
</dbReference>
<dbReference type="FunFam" id="3.90.740.10:FF:000012">
    <property type="entry name" value="Leucine--tRNA ligase"/>
    <property type="match status" value="1"/>
</dbReference>
<dbReference type="Gene3D" id="2.20.28.290">
    <property type="match status" value="1"/>
</dbReference>
<dbReference type="Gene3D" id="3.10.20.590">
    <property type="match status" value="1"/>
</dbReference>
<dbReference type="Gene3D" id="3.40.50.620">
    <property type="entry name" value="HUPs"/>
    <property type="match status" value="2"/>
</dbReference>
<dbReference type="Gene3D" id="1.10.730.10">
    <property type="entry name" value="Isoleucyl-tRNA Synthetase, Domain 1"/>
    <property type="match status" value="2"/>
</dbReference>
<dbReference type="HAMAP" id="MF_00049_B">
    <property type="entry name" value="Leu_tRNA_synth_B"/>
    <property type="match status" value="1"/>
</dbReference>
<dbReference type="InterPro" id="IPR001412">
    <property type="entry name" value="aa-tRNA-synth_I_CS"/>
</dbReference>
<dbReference type="InterPro" id="IPR002300">
    <property type="entry name" value="aa-tRNA-synth_Ia"/>
</dbReference>
<dbReference type="InterPro" id="IPR002302">
    <property type="entry name" value="Leu-tRNA-ligase"/>
</dbReference>
<dbReference type="InterPro" id="IPR025709">
    <property type="entry name" value="Leu_tRNA-synth_edit"/>
</dbReference>
<dbReference type="InterPro" id="IPR013155">
    <property type="entry name" value="M/V/L/I-tRNA-synth_anticd-bd"/>
</dbReference>
<dbReference type="InterPro" id="IPR015413">
    <property type="entry name" value="Methionyl/Leucyl_tRNA_Synth"/>
</dbReference>
<dbReference type="InterPro" id="IPR014729">
    <property type="entry name" value="Rossmann-like_a/b/a_fold"/>
</dbReference>
<dbReference type="InterPro" id="IPR009080">
    <property type="entry name" value="tRNAsynth_Ia_anticodon-bd"/>
</dbReference>
<dbReference type="InterPro" id="IPR009008">
    <property type="entry name" value="Val/Leu/Ile-tRNA-synth_edit"/>
</dbReference>
<dbReference type="NCBIfam" id="TIGR00396">
    <property type="entry name" value="leuS_bact"/>
    <property type="match status" value="1"/>
</dbReference>
<dbReference type="PANTHER" id="PTHR43740:SF2">
    <property type="entry name" value="LEUCINE--TRNA LIGASE, MITOCHONDRIAL"/>
    <property type="match status" value="1"/>
</dbReference>
<dbReference type="PANTHER" id="PTHR43740">
    <property type="entry name" value="LEUCYL-TRNA SYNTHETASE"/>
    <property type="match status" value="1"/>
</dbReference>
<dbReference type="Pfam" id="PF08264">
    <property type="entry name" value="Anticodon_1"/>
    <property type="match status" value="1"/>
</dbReference>
<dbReference type="Pfam" id="PF00133">
    <property type="entry name" value="tRNA-synt_1"/>
    <property type="match status" value="2"/>
</dbReference>
<dbReference type="Pfam" id="PF13603">
    <property type="entry name" value="tRNA-synt_1_2"/>
    <property type="match status" value="1"/>
</dbReference>
<dbReference type="Pfam" id="PF09334">
    <property type="entry name" value="tRNA-synt_1g"/>
    <property type="match status" value="1"/>
</dbReference>
<dbReference type="PRINTS" id="PR00985">
    <property type="entry name" value="TRNASYNTHLEU"/>
</dbReference>
<dbReference type="SUPFAM" id="SSF47323">
    <property type="entry name" value="Anticodon-binding domain of a subclass of class I aminoacyl-tRNA synthetases"/>
    <property type="match status" value="1"/>
</dbReference>
<dbReference type="SUPFAM" id="SSF52374">
    <property type="entry name" value="Nucleotidylyl transferase"/>
    <property type="match status" value="1"/>
</dbReference>
<dbReference type="SUPFAM" id="SSF50677">
    <property type="entry name" value="ValRS/IleRS/LeuRS editing domain"/>
    <property type="match status" value="1"/>
</dbReference>
<dbReference type="PROSITE" id="PS00178">
    <property type="entry name" value="AA_TRNA_LIGASE_I"/>
    <property type="match status" value="1"/>
</dbReference>
<gene>
    <name evidence="1" type="primary">leuS</name>
    <name type="ordered locus">Sbal195_3447</name>
</gene>
<accession>A9L001</accession>
<reference key="1">
    <citation type="submission" date="2007-11" db="EMBL/GenBank/DDBJ databases">
        <title>Complete sequence of chromosome of Shewanella baltica OS195.</title>
        <authorList>
            <consortium name="US DOE Joint Genome Institute"/>
            <person name="Copeland A."/>
            <person name="Lucas S."/>
            <person name="Lapidus A."/>
            <person name="Barry K."/>
            <person name="Glavina del Rio T."/>
            <person name="Dalin E."/>
            <person name="Tice H."/>
            <person name="Pitluck S."/>
            <person name="Chain P."/>
            <person name="Malfatti S."/>
            <person name="Shin M."/>
            <person name="Vergez L."/>
            <person name="Schmutz J."/>
            <person name="Larimer F."/>
            <person name="Land M."/>
            <person name="Hauser L."/>
            <person name="Kyrpides N."/>
            <person name="Kim E."/>
            <person name="Brettar I."/>
            <person name="Rodrigues J."/>
            <person name="Konstantinidis K."/>
            <person name="Klappenbach J."/>
            <person name="Hofle M."/>
            <person name="Tiedje J."/>
            <person name="Richardson P."/>
        </authorList>
    </citation>
    <scope>NUCLEOTIDE SEQUENCE [LARGE SCALE GENOMIC DNA]</scope>
    <source>
        <strain>OS195</strain>
    </source>
</reference>
<evidence type="ECO:0000255" key="1">
    <source>
        <dbReference type="HAMAP-Rule" id="MF_00049"/>
    </source>
</evidence>
<evidence type="ECO:0000305" key="2"/>